<comment type="function">
    <text evidence="1">Transaldolase is important for the balance of metabolites in the pentose-phosphate pathway.</text>
</comment>
<comment type="catalytic activity">
    <reaction>
        <text>D-sedoheptulose 7-phosphate + D-glyceraldehyde 3-phosphate = D-erythrose 4-phosphate + beta-D-fructose 6-phosphate</text>
        <dbReference type="Rhea" id="RHEA:17053"/>
        <dbReference type="ChEBI" id="CHEBI:16897"/>
        <dbReference type="ChEBI" id="CHEBI:57483"/>
        <dbReference type="ChEBI" id="CHEBI:57634"/>
        <dbReference type="ChEBI" id="CHEBI:59776"/>
        <dbReference type="EC" id="2.2.1.2"/>
    </reaction>
</comment>
<comment type="pathway">
    <text>Carbohydrate degradation; pentose phosphate pathway; D-glyceraldehyde 3-phosphate and beta-D-fructose 6-phosphate from D-ribose 5-phosphate and D-xylulose 5-phosphate (non-oxidative stage): step 2/3.</text>
</comment>
<comment type="subcellular location">
    <subcellularLocation>
        <location evidence="1">Cytoplasm</location>
    </subcellularLocation>
</comment>
<comment type="similarity">
    <text evidence="2">Belongs to the transaldolase family. Type 3B subfamily.</text>
</comment>
<organism>
    <name type="scientific">Aquifex aeolicus (strain VF5)</name>
    <dbReference type="NCBI Taxonomy" id="224324"/>
    <lineage>
        <taxon>Bacteria</taxon>
        <taxon>Pseudomonadati</taxon>
        <taxon>Aquificota</taxon>
        <taxon>Aquificia</taxon>
        <taxon>Aquificales</taxon>
        <taxon>Aquificaceae</taxon>
        <taxon>Aquifex</taxon>
    </lineage>
</organism>
<name>TAL_AQUAE</name>
<proteinExistence type="inferred from homology"/>
<gene>
    <name type="primary">tal</name>
    <name type="synonym">talC</name>
    <name type="ordered locus">aq_119</name>
</gene>
<feature type="chain" id="PRO_0000173652" description="Probable transaldolase">
    <location>
        <begin position="1"/>
        <end position="217"/>
    </location>
</feature>
<feature type="active site" description="Schiff-base intermediate with substrate" evidence="1">
    <location>
        <position position="83"/>
    </location>
</feature>
<dbReference type="EC" id="2.2.1.2"/>
<dbReference type="EMBL" id="AE000657">
    <property type="protein sequence ID" value="AAC06476.1"/>
    <property type="molecule type" value="Genomic_DNA"/>
</dbReference>
<dbReference type="PIR" id="E70311">
    <property type="entry name" value="E70311"/>
</dbReference>
<dbReference type="RefSeq" id="NP_213080.1">
    <property type="nucleotide sequence ID" value="NC_000918.1"/>
</dbReference>
<dbReference type="RefSeq" id="WP_010880018.1">
    <property type="nucleotide sequence ID" value="NC_000918.1"/>
</dbReference>
<dbReference type="SMR" id="O66520"/>
<dbReference type="FunCoup" id="O66520">
    <property type="interactions" value="196"/>
</dbReference>
<dbReference type="STRING" id="224324.aq_119"/>
<dbReference type="EnsemblBacteria" id="AAC06476">
    <property type="protein sequence ID" value="AAC06476"/>
    <property type="gene ID" value="aq_119"/>
</dbReference>
<dbReference type="KEGG" id="aae:aq_119"/>
<dbReference type="PATRIC" id="fig|224324.8.peg.103"/>
<dbReference type="eggNOG" id="COG0176">
    <property type="taxonomic scope" value="Bacteria"/>
</dbReference>
<dbReference type="HOGENOM" id="CLU_079764_0_0_0"/>
<dbReference type="InParanoid" id="O66520"/>
<dbReference type="OrthoDB" id="9807051at2"/>
<dbReference type="UniPathway" id="UPA00115">
    <property type="reaction ID" value="UER00414"/>
</dbReference>
<dbReference type="Proteomes" id="UP000000798">
    <property type="component" value="Chromosome"/>
</dbReference>
<dbReference type="GO" id="GO:0005737">
    <property type="term" value="C:cytoplasm"/>
    <property type="evidence" value="ECO:0007669"/>
    <property type="project" value="UniProtKB-SubCell"/>
</dbReference>
<dbReference type="GO" id="GO:0016832">
    <property type="term" value="F:aldehyde-lyase activity"/>
    <property type="evidence" value="ECO:0007669"/>
    <property type="project" value="InterPro"/>
</dbReference>
<dbReference type="GO" id="GO:0004801">
    <property type="term" value="F:transaldolase activity"/>
    <property type="evidence" value="ECO:0007669"/>
    <property type="project" value="UniProtKB-UniRule"/>
</dbReference>
<dbReference type="GO" id="GO:0005975">
    <property type="term" value="P:carbohydrate metabolic process"/>
    <property type="evidence" value="ECO:0007669"/>
    <property type="project" value="InterPro"/>
</dbReference>
<dbReference type="GO" id="GO:0006098">
    <property type="term" value="P:pentose-phosphate shunt"/>
    <property type="evidence" value="ECO:0007669"/>
    <property type="project" value="UniProtKB-UniRule"/>
</dbReference>
<dbReference type="CDD" id="cd00956">
    <property type="entry name" value="Transaldolase_FSA"/>
    <property type="match status" value="1"/>
</dbReference>
<dbReference type="FunFam" id="3.20.20.70:FF:000018">
    <property type="entry name" value="Probable transaldolase"/>
    <property type="match status" value="1"/>
</dbReference>
<dbReference type="Gene3D" id="3.20.20.70">
    <property type="entry name" value="Aldolase class I"/>
    <property type="match status" value="1"/>
</dbReference>
<dbReference type="HAMAP" id="MF_00494">
    <property type="entry name" value="Transaldolase_3b"/>
    <property type="match status" value="1"/>
</dbReference>
<dbReference type="InterPro" id="IPR013785">
    <property type="entry name" value="Aldolase_TIM"/>
</dbReference>
<dbReference type="InterPro" id="IPR001585">
    <property type="entry name" value="TAL/FSA"/>
</dbReference>
<dbReference type="InterPro" id="IPR022999">
    <property type="entry name" value="Transaldolase_3B"/>
</dbReference>
<dbReference type="InterPro" id="IPR004731">
    <property type="entry name" value="Transaldolase_3B/F6P_aldolase"/>
</dbReference>
<dbReference type="InterPro" id="IPR018225">
    <property type="entry name" value="Transaldolase_AS"/>
</dbReference>
<dbReference type="InterPro" id="IPR033919">
    <property type="entry name" value="TSA/FSA_arc/bac"/>
</dbReference>
<dbReference type="NCBIfam" id="TIGR00875">
    <property type="entry name" value="fsa_talC_mipB"/>
    <property type="match status" value="1"/>
</dbReference>
<dbReference type="PANTHER" id="PTHR10683:SF40">
    <property type="entry name" value="FRUCTOSE-6-PHOSPHATE ALDOLASE 1-RELATED"/>
    <property type="match status" value="1"/>
</dbReference>
<dbReference type="PANTHER" id="PTHR10683">
    <property type="entry name" value="TRANSALDOLASE"/>
    <property type="match status" value="1"/>
</dbReference>
<dbReference type="Pfam" id="PF00923">
    <property type="entry name" value="TAL_FSA"/>
    <property type="match status" value="1"/>
</dbReference>
<dbReference type="SUPFAM" id="SSF51569">
    <property type="entry name" value="Aldolase"/>
    <property type="match status" value="1"/>
</dbReference>
<dbReference type="PROSITE" id="PS01054">
    <property type="entry name" value="TRANSALDOLASE_1"/>
    <property type="match status" value="1"/>
</dbReference>
<keyword id="KW-0963">Cytoplasm</keyword>
<keyword id="KW-0570">Pentose shunt</keyword>
<keyword id="KW-1185">Reference proteome</keyword>
<keyword id="KW-0704">Schiff base</keyword>
<keyword id="KW-0808">Transferase</keyword>
<evidence type="ECO:0000250" key="1"/>
<evidence type="ECO:0000305" key="2"/>
<reference key="1">
    <citation type="journal article" date="1998" name="Nature">
        <title>The complete genome of the hyperthermophilic bacterium Aquifex aeolicus.</title>
        <authorList>
            <person name="Deckert G."/>
            <person name="Warren P.V."/>
            <person name="Gaasterland T."/>
            <person name="Young W.G."/>
            <person name="Lenox A.L."/>
            <person name="Graham D.E."/>
            <person name="Overbeek R."/>
            <person name="Snead M.A."/>
            <person name="Keller M."/>
            <person name="Aujay M."/>
            <person name="Huber R."/>
            <person name="Feldman R.A."/>
            <person name="Short J.M."/>
            <person name="Olsen G.J."/>
            <person name="Swanson R.V."/>
        </authorList>
    </citation>
    <scope>NUCLEOTIDE SEQUENCE [LARGE SCALE GENOMIC DNA]</scope>
    <source>
        <strain>VF5</strain>
    </source>
</reference>
<accession>O66520</accession>
<sequence length="217" mass="23978">MKFFLDTANVEEIKKAMEWGILDGVTTNPTLISKTGRPFKEVVKEILELVDGPVSLETVSLDAEGMIREGRMLAELGENVVVKIPMTPEGLKAVIALESEGIPTNVTLVFSPTQALLAAKAGASYVSPFVGRLDDISGEGMKLIEEIKTIFSNYEFDTEIIVASVRHPMHVLESALIGADICTMPFKVMEQLFKHPLTDIGLERFLKDWEKVPEKPF</sequence>
<protein>
    <recommendedName>
        <fullName>Probable transaldolase</fullName>
        <ecNumber>2.2.1.2</ecNumber>
    </recommendedName>
</protein>